<dbReference type="EMBL" id="CP000247">
    <property type="protein sequence ID" value="ABG68689.1"/>
    <property type="molecule type" value="Genomic_DNA"/>
</dbReference>
<dbReference type="RefSeq" id="WP_000850550.1">
    <property type="nucleotide sequence ID" value="NC_008253.1"/>
</dbReference>
<dbReference type="SMR" id="Q0TK42"/>
<dbReference type="GeneID" id="93776851"/>
<dbReference type="KEGG" id="ecp:ECP_0661"/>
<dbReference type="HOGENOM" id="CLU_161438_2_1_6"/>
<dbReference type="Proteomes" id="UP000009182">
    <property type="component" value="Chromosome"/>
</dbReference>
<dbReference type="GO" id="GO:0005829">
    <property type="term" value="C:cytosol"/>
    <property type="evidence" value="ECO:0007669"/>
    <property type="project" value="TreeGrafter"/>
</dbReference>
<dbReference type="FunFam" id="3.30.70.260:FF:000002">
    <property type="entry name" value="UPF0250 protein YbeD"/>
    <property type="match status" value="1"/>
</dbReference>
<dbReference type="Gene3D" id="3.30.70.260">
    <property type="match status" value="1"/>
</dbReference>
<dbReference type="HAMAP" id="MF_00659">
    <property type="entry name" value="UPF0250"/>
    <property type="match status" value="1"/>
</dbReference>
<dbReference type="InterPro" id="IPR007454">
    <property type="entry name" value="UPF0250_YbeD-like"/>
</dbReference>
<dbReference type="InterPro" id="IPR027471">
    <property type="entry name" value="YbeD-like_sf"/>
</dbReference>
<dbReference type="NCBIfam" id="NF003447">
    <property type="entry name" value="PRK04998.1"/>
    <property type="match status" value="1"/>
</dbReference>
<dbReference type="PANTHER" id="PTHR38036">
    <property type="entry name" value="UPF0250 PROTEIN YBED"/>
    <property type="match status" value="1"/>
</dbReference>
<dbReference type="PANTHER" id="PTHR38036:SF1">
    <property type="entry name" value="UPF0250 PROTEIN YBED"/>
    <property type="match status" value="1"/>
</dbReference>
<dbReference type="Pfam" id="PF04359">
    <property type="entry name" value="DUF493"/>
    <property type="match status" value="1"/>
</dbReference>
<dbReference type="SUPFAM" id="SSF117991">
    <property type="entry name" value="YbeD/HP0495-like"/>
    <property type="match status" value="1"/>
</dbReference>
<protein>
    <recommendedName>
        <fullName evidence="1">UPF0250 protein YbeD</fullName>
    </recommendedName>
</protein>
<evidence type="ECO:0000255" key="1">
    <source>
        <dbReference type="HAMAP-Rule" id="MF_00659"/>
    </source>
</evidence>
<comment type="similarity">
    <text evidence="1">Belongs to the UPF0250 family.</text>
</comment>
<organism>
    <name type="scientific">Escherichia coli O6:K15:H31 (strain 536 / UPEC)</name>
    <dbReference type="NCBI Taxonomy" id="362663"/>
    <lineage>
        <taxon>Bacteria</taxon>
        <taxon>Pseudomonadati</taxon>
        <taxon>Pseudomonadota</taxon>
        <taxon>Gammaproteobacteria</taxon>
        <taxon>Enterobacterales</taxon>
        <taxon>Enterobacteriaceae</taxon>
        <taxon>Escherichia</taxon>
    </lineage>
</organism>
<feature type="chain" id="PRO_1000061864" description="UPF0250 protein YbeD">
    <location>
        <begin position="1"/>
        <end position="87"/>
    </location>
</feature>
<reference key="1">
    <citation type="journal article" date="2006" name="Mol. Microbiol.">
        <title>Role of pathogenicity island-associated integrases in the genome plasticity of uropathogenic Escherichia coli strain 536.</title>
        <authorList>
            <person name="Hochhut B."/>
            <person name="Wilde C."/>
            <person name="Balling G."/>
            <person name="Middendorf B."/>
            <person name="Dobrindt U."/>
            <person name="Brzuszkiewicz E."/>
            <person name="Gottschalk G."/>
            <person name="Carniel E."/>
            <person name="Hacker J."/>
        </authorList>
    </citation>
    <scope>NUCLEOTIDE SEQUENCE [LARGE SCALE GENOMIC DNA]</scope>
    <source>
        <strain>536 / UPEC</strain>
    </source>
</reference>
<name>YBED_ECOL5</name>
<sequence length="87" mass="9827">MKTKLNELLEFPTPFTYKVMGQALPELVDQVVEVVQRHAPGDYTPTVKPSSKGNYHSVSITINATHIEQVETLYEELGKIDIVRMVL</sequence>
<gene>
    <name evidence="1" type="primary">ybeD</name>
    <name type="ordered locus">ECP_0661</name>
</gene>
<accession>Q0TK42</accession>
<proteinExistence type="inferred from homology"/>